<proteinExistence type="evidence at protein level"/>
<comment type="function">
    <text evidence="4">Involved in inflammation.</text>
</comment>
<comment type="similarity">
    <text evidence="4">Belongs to the NLRP family.</text>
</comment>
<reference key="1">
    <citation type="journal article" date="2003" name="Nat. Rev. Mol. Cell Biol.">
        <title>NALPs: a novel protein family involved in inflammation.</title>
        <authorList>
            <person name="Tschopp J."/>
            <person name="Martinon F."/>
            <person name="Burns K."/>
        </authorList>
    </citation>
    <scope>NUCLEOTIDE SEQUENCE [MRNA]</scope>
    <scope>VARIANT ARG-247</scope>
</reference>
<reference key="2">
    <citation type="journal article" date="2003" name="Nat. Rev. Immunol.">
        <title>NODs: intracellular proteins involved in inflammation and apoptosis.</title>
        <authorList>
            <person name="Inohara N."/>
            <person name="Nunez G."/>
        </authorList>
    </citation>
    <scope>NUCLEOTIDE SEQUENCE [MRNA]</scope>
</reference>
<keyword id="KW-0067">ATP-binding</keyword>
<keyword id="KW-0433">Leucine-rich repeat</keyword>
<keyword id="KW-0547">Nucleotide-binding</keyword>
<keyword id="KW-1267">Proteomics identification</keyword>
<keyword id="KW-1185">Reference proteome</keyword>
<keyword id="KW-0677">Repeat</keyword>
<accession>Q86W25</accession>
<accession>Q7RTR5</accession>
<name>NAL13_HUMAN</name>
<protein>
    <recommendedName>
        <fullName>NACHT, LRR and PYD domains-containing protein 13</fullName>
    </recommendedName>
    <alternativeName>
        <fullName>Nucleotide-binding oligomerization domain protein 14</fullName>
    </alternativeName>
</protein>
<dbReference type="EMBL" id="AY154468">
    <property type="protein sequence ID" value="AAO18164.1"/>
    <property type="molecule type" value="mRNA"/>
</dbReference>
<dbReference type="EMBL" id="BK001108">
    <property type="protein sequence ID" value="DAA01241.1"/>
    <property type="molecule type" value="mRNA"/>
</dbReference>
<dbReference type="CCDS" id="CCDS33119.1"/>
<dbReference type="RefSeq" id="NP_001307986.1">
    <property type="nucleotide sequence ID" value="NM_001321057.1"/>
</dbReference>
<dbReference type="RefSeq" id="NP_789780.2">
    <property type="nucleotide sequence ID" value="NM_176810.2"/>
</dbReference>
<dbReference type="SMR" id="Q86W25"/>
<dbReference type="BioGRID" id="125963">
    <property type="interactions" value="4"/>
</dbReference>
<dbReference type="FunCoup" id="Q86W25">
    <property type="interactions" value="2"/>
</dbReference>
<dbReference type="STRING" id="9606.ENSP00000343891"/>
<dbReference type="iPTMnet" id="Q86W25"/>
<dbReference type="PhosphoSitePlus" id="Q86W25"/>
<dbReference type="BioMuta" id="NLRP13"/>
<dbReference type="DMDM" id="145559500"/>
<dbReference type="jPOST" id="Q86W25"/>
<dbReference type="MassIVE" id="Q86W25"/>
<dbReference type="PaxDb" id="9606-ENSP00000343891"/>
<dbReference type="PeptideAtlas" id="Q86W25"/>
<dbReference type="ProteomicsDB" id="70104"/>
<dbReference type="Antibodypedia" id="59163">
    <property type="antibodies" value="38 antibodies from 18 providers"/>
</dbReference>
<dbReference type="DNASU" id="126204"/>
<dbReference type="Ensembl" id="ENST00000342929.4">
    <property type="protein sequence ID" value="ENSP00000343891.3"/>
    <property type="gene ID" value="ENSG00000173572.12"/>
</dbReference>
<dbReference type="GeneID" id="126204"/>
<dbReference type="KEGG" id="hsa:126204"/>
<dbReference type="MANE-Select" id="ENST00000342929.4">
    <property type="protein sequence ID" value="ENSP00000343891.3"/>
    <property type="RefSeq nucleotide sequence ID" value="NM_176810.2"/>
    <property type="RefSeq protein sequence ID" value="NP_789780.2"/>
</dbReference>
<dbReference type="UCSC" id="uc010ygg.3">
    <property type="organism name" value="human"/>
</dbReference>
<dbReference type="AGR" id="HGNC:22937"/>
<dbReference type="CTD" id="126204"/>
<dbReference type="DisGeNET" id="126204"/>
<dbReference type="GeneCards" id="NLRP13"/>
<dbReference type="HGNC" id="HGNC:22937">
    <property type="gene designation" value="NLRP13"/>
</dbReference>
<dbReference type="HPA" id="ENSG00000173572">
    <property type="expression patterns" value="Tissue enhanced (ovary)"/>
</dbReference>
<dbReference type="MalaCards" id="NLRP13"/>
<dbReference type="MIM" id="609660">
    <property type="type" value="gene"/>
</dbReference>
<dbReference type="neXtProt" id="NX_Q86W25"/>
<dbReference type="OpenTargets" id="ENSG00000173572"/>
<dbReference type="PharmGKB" id="PA162397891"/>
<dbReference type="VEuPathDB" id="HostDB:ENSG00000173572"/>
<dbReference type="eggNOG" id="ENOG502QV55">
    <property type="taxonomic scope" value="Eukaryota"/>
</dbReference>
<dbReference type="GeneTree" id="ENSGT00940000163591"/>
<dbReference type="HOGENOM" id="CLU_002274_2_1_1"/>
<dbReference type="InParanoid" id="Q86W25"/>
<dbReference type="OMA" id="TWDNIDW"/>
<dbReference type="OrthoDB" id="120976at2759"/>
<dbReference type="PAN-GO" id="Q86W25">
    <property type="GO annotations" value="2 GO annotations based on evolutionary models"/>
</dbReference>
<dbReference type="PhylomeDB" id="Q86W25"/>
<dbReference type="PathwayCommons" id="Q86W25"/>
<dbReference type="BioGRID-ORCS" id="126204">
    <property type="hits" value="14 hits in 1139 CRISPR screens"/>
</dbReference>
<dbReference type="GeneWiki" id="NLRP13"/>
<dbReference type="GenomeRNAi" id="126204"/>
<dbReference type="Pharos" id="Q86W25">
    <property type="development level" value="Tdark"/>
</dbReference>
<dbReference type="PRO" id="PR:Q86W25"/>
<dbReference type="Proteomes" id="UP000005640">
    <property type="component" value="Chromosome 19"/>
</dbReference>
<dbReference type="RNAct" id="Q86W25">
    <property type="molecule type" value="protein"/>
</dbReference>
<dbReference type="Bgee" id="ENSG00000173572">
    <property type="expression patterns" value="Expressed in oocyte and 38 other cell types or tissues"/>
</dbReference>
<dbReference type="ExpressionAtlas" id="Q86W25">
    <property type="expression patterns" value="baseline and differential"/>
</dbReference>
<dbReference type="GO" id="GO:0005737">
    <property type="term" value="C:cytoplasm"/>
    <property type="evidence" value="ECO:0000318"/>
    <property type="project" value="GO_Central"/>
</dbReference>
<dbReference type="GO" id="GO:0005524">
    <property type="term" value="F:ATP binding"/>
    <property type="evidence" value="ECO:0007669"/>
    <property type="project" value="UniProtKB-KW"/>
</dbReference>
<dbReference type="GO" id="GO:0050727">
    <property type="term" value="P:regulation of inflammatory response"/>
    <property type="evidence" value="ECO:0000318"/>
    <property type="project" value="GO_Central"/>
</dbReference>
<dbReference type="CDD" id="cd08320">
    <property type="entry name" value="Pyrin_NALPs"/>
    <property type="match status" value="1"/>
</dbReference>
<dbReference type="Gene3D" id="1.10.533.10">
    <property type="entry name" value="Death Domain, Fas"/>
    <property type="match status" value="1"/>
</dbReference>
<dbReference type="Gene3D" id="3.40.50.300">
    <property type="entry name" value="P-loop containing nucleotide triphosphate hydrolases"/>
    <property type="match status" value="1"/>
</dbReference>
<dbReference type="Gene3D" id="3.80.10.10">
    <property type="entry name" value="Ribonuclease Inhibitor"/>
    <property type="match status" value="3"/>
</dbReference>
<dbReference type="InterPro" id="IPR004020">
    <property type="entry name" value="DAPIN"/>
</dbReference>
<dbReference type="InterPro" id="IPR011029">
    <property type="entry name" value="DEATH-like_dom_sf"/>
</dbReference>
<dbReference type="InterPro" id="IPR001611">
    <property type="entry name" value="Leu-rich_rpt"/>
</dbReference>
<dbReference type="InterPro" id="IPR032675">
    <property type="entry name" value="LRR_dom_sf"/>
</dbReference>
<dbReference type="InterPro" id="IPR007111">
    <property type="entry name" value="NACHT_NTPase"/>
</dbReference>
<dbReference type="InterPro" id="IPR041267">
    <property type="entry name" value="NLRP_HD2"/>
</dbReference>
<dbReference type="InterPro" id="IPR050637">
    <property type="entry name" value="NLRP_innate_immun_reg"/>
</dbReference>
<dbReference type="InterPro" id="IPR041075">
    <property type="entry name" value="NOD1/2_WH"/>
</dbReference>
<dbReference type="InterPro" id="IPR027417">
    <property type="entry name" value="P-loop_NTPase"/>
</dbReference>
<dbReference type="PANTHER" id="PTHR45690">
    <property type="entry name" value="NACHT, LRR AND PYD DOMAINS-CONTAINING PROTEIN 12"/>
    <property type="match status" value="1"/>
</dbReference>
<dbReference type="PANTHER" id="PTHR45690:SF16">
    <property type="entry name" value="NACHT, LRR AND PYD DOMAINS-CONTAINING PROTEIN 13"/>
    <property type="match status" value="1"/>
</dbReference>
<dbReference type="Pfam" id="PF00560">
    <property type="entry name" value="LRR_1"/>
    <property type="match status" value="1"/>
</dbReference>
<dbReference type="Pfam" id="PF13516">
    <property type="entry name" value="LRR_6"/>
    <property type="match status" value="4"/>
</dbReference>
<dbReference type="Pfam" id="PF05729">
    <property type="entry name" value="NACHT"/>
    <property type="match status" value="1"/>
</dbReference>
<dbReference type="Pfam" id="PF17776">
    <property type="entry name" value="NLRC4_HD2"/>
    <property type="match status" value="1"/>
</dbReference>
<dbReference type="Pfam" id="PF17779">
    <property type="entry name" value="NOD2_WH"/>
    <property type="match status" value="1"/>
</dbReference>
<dbReference type="Pfam" id="PF02758">
    <property type="entry name" value="PYRIN"/>
    <property type="match status" value="1"/>
</dbReference>
<dbReference type="SMART" id="SM00368">
    <property type="entry name" value="LRR_RI"/>
    <property type="match status" value="9"/>
</dbReference>
<dbReference type="SMART" id="SM01289">
    <property type="entry name" value="PYRIN"/>
    <property type="match status" value="1"/>
</dbReference>
<dbReference type="SUPFAM" id="SSF47986">
    <property type="entry name" value="DEATH domain"/>
    <property type="match status" value="1"/>
</dbReference>
<dbReference type="SUPFAM" id="SSF52540">
    <property type="entry name" value="P-loop containing nucleoside triphosphate hydrolases"/>
    <property type="match status" value="1"/>
</dbReference>
<dbReference type="SUPFAM" id="SSF52047">
    <property type="entry name" value="RNI-like"/>
    <property type="match status" value="1"/>
</dbReference>
<dbReference type="PROSITE" id="PS50824">
    <property type="entry name" value="DAPIN"/>
    <property type="match status" value="1"/>
</dbReference>
<dbReference type="PROSITE" id="PS50837">
    <property type="entry name" value="NACHT"/>
    <property type="match status" value="1"/>
</dbReference>
<gene>
    <name type="primary">NLRP13</name>
    <name type="synonym">NALP13</name>
    <name type="synonym">NOD14</name>
</gene>
<feature type="chain" id="PRO_0000080900" description="NACHT, LRR and PYD domains-containing protein 13">
    <location>
        <begin position="1"/>
        <end position="1043"/>
    </location>
</feature>
<feature type="domain" description="Pyrin" evidence="1">
    <location>
        <begin position="1"/>
        <end position="107"/>
    </location>
</feature>
<feature type="domain" description="NACHT" evidence="2">
    <location>
        <begin position="229"/>
        <end position="558"/>
    </location>
</feature>
<feature type="repeat" description="LRR 1">
    <location>
        <begin position="725"/>
        <end position="749"/>
    </location>
</feature>
<feature type="repeat" description="LRR 2">
    <location>
        <begin position="781"/>
        <end position="804"/>
    </location>
</feature>
<feature type="repeat" description="LRR 3">
    <location>
        <begin position="837"/>
        <end position="864"/>
    </location>
</feature>
<feature type="repeat" description="LRR 4">
    <location>
        <begin position="894"/>
        <end position="917"/>
    </location>
</feature>
<feature type="repeat" description="LRR 5">
    <location>
        <begin position="923"/>
        <end position="946"/>
    </location>
</feature>
<feature type="repeat" description="LRR 6">
    <location>
        <begin position="951"/>
        <end position="978"/>
    </location>
</feature>
<feature type="repeat" description="LRR 7">
    <location>
        <begin position="1007"/>
        <end position="1030"/>
    </location>
</feature>
<feature type="binding site" evidence="2">
    <location>
        <begin position="235"/>
        <end position="242"/>
    </location>
    <ligand>
        <name>ATP</name>
        <dbReference type="ChEBI" id="CHEBI:30616"/>
    </ligand>
</feature>
<feature type="sequence variant" id="VAR_031707" description="In dbSNP:rs303997." evidence="3">
    <original>Q</original>
    <variation>R</variation>
    <location>
        <position position="247"/>
    </location>
</feature>
<feature type="sequence variant" id="VAR_031708" description="In dbSNP:rs17711239.">
    <original>N</original>
    <variation>S</variation>
    <location>
        <position position="781"/>
    </location>
</feature>
<feature type="sequence conflict" description="In Ref. 2; DAA01241." evidence="4" ref="2">
    <original>KALKKSTCRLQKLG</original>
    <variation>FKKTCTM</variation>
    <location>
        <begin position="1030"/>
        <end position="1043"/>
    </location>
</feature>
<organism>
    <name type="scientific">Homo sapiens</name>
    <name type="common">Human</name>
    <dbReference type="NCBI Taxonomy" id="9606"/>
    <lineage>
        <taxon>Eukaryota</taxon>
        <taxon>Metazoa</taxon>
        <taxon>Chordata</taxon>
        <taxon>Craniata</taxon>
        <taxon>Vertebrata</taxon>
        <taxon>Euteleostomi</taxon>
        <taxon>Mammalia</taxon>
        <taxon>Eutheria</taxon>
        <taxon>Euarchontoglires</taxon>
        <taxon>Primates</taxon>
        <taxon>Haplorrhini</taxon>
        <taxon>Catarrhini</taxon>
        <taxon>Hominidae</taxon>
        <taxon>Homo</taxon>
    </lineage>
</organism>
<evidence type="ECO:0000255" key="1">
    <source>
        <dbReference type="PROSITE-ProRule" id="PRU00061"/>
    </source>
</evidence>
<evidence type="ECO:0000255" key="2">
    <source>
        <dbReference type="PROSITE-ProRule" id="PRU00136"/>
    </source>
</evidence>
<evidence type="ECO:0000269" key="3">
    <source>
    </source>
</evidence>
<evidence type="ECO:0000305" key="4"/>
<sequence length="1043" mass="118884">MNFSVITCPNGGTNQGLLPYLMALDQYQLEEFKLCLEPQQLMDFWSAPQGHFPRIPWANLRAADPLNLSFLLDEHFPKGQAWKVVLGIFQTMNLTSLCEKVRAEMKENVQTQELQDPTQEDLEMLEAAAGNMQTQGCQDPNQEELDELEEETGNVQAQGCQDPNQEEPEMLEEADHRRKYRENMKAELLETWDNISWPKDHVYIRNTSKDEHEELQRLLDPNRTRAQAQTIVLVGRAGVGKTTLAMQAMLHWANGVLFQQRFSYVFYLSCHKIRYMKETTFAELISLDWPDFDAPIEEFMSQPEKLLFIIDGFEEIIISESRSESLDDGSPCTDWYQELPVTKILHSLLKKELVPLATLLITIKTWFVRDLKASLVNPCFVQITGFTGDDLRVYFMRHFDDSSEVEKILQQLRKNETLFHSCSAPMVCWTVCSCLKQPKVRYYDLQSITQTTTSLYAYFFSNLFSTAEVDLADDSWPGQWRALCSLAIEGLWSMNFTFNKEDTEIEGLEVPFIDSLYEFNILQKINDCGGCTTFTHLSFQEFFAAMSFVLEEPREFPPHSTKPQEMKMLLQHVLLDKEAYWTPVVLFFFGLLNKNIARELEDTLHCKISPRVMEELLKWGEELGKAESASLQFHILRLFHCLHESQEEDFTKKMLGRIFEVDLNILEDEELQASSFCLKHCKRLNKLRLSVSSHILERDLEILETSKFDSRMHAWNSICSTLVTNENLHELDLSNSKLHASSVKGLCLALKNPRCKVQKLTCKSVTPEWVLQDLIIALQGNSKLTHLNFSSNKLGMTVPLILKALRHSACNLKYLCLEKCNLSAASCQDLALFLTSIQHVTRLCLGFNRLQDDGIKLLCAALTHPKCALERLELWFCQLAAPACKHLSDALLQNRSLTHLNLSKNSLRDEGVKFLCEALGRPDGNLQSLNLSGCSFTREGCGELANALSHNHNVKILDLGENDLQDDGVKLLCEALKPHRALHTLGLAKCNLTTACCQHLFSVLSSSKSLVNLNLLGNELDTDGVKMLCKALKKSTCRLQKLG</sequence>